<dbReference type="GO" id="GO:0005615">
    <property type="term" value="C:extracellular space"/>
    <property type="evidence" value="ECO:0000314"/>
    <property type="project" value="UniProtKB"/>
</dbReference>
<dbReference type="GO" id="GO:0050829">
    <property type="term" value="P:defense response to Gram-negative bacterium"/>
    <property type="evidence" value="ECO:0000314"/>
    <property type="project" value="UniProtKB"/>
</dbReference>
<dbReference type="GO" id="GO:0045087">
    <property type="term" value="P:innate immune response"/>
    <property type="evidence" value="ECO:0007669"/>
    <property type="project" value="UniProtKB-KW"/>
</dbReference>
<proteinExistence type="evidence at protein level"/>
<accession>C0HKX8</accession>
<sequence>GKPNRPRPAPIQPRPPHPRL</sequence>
<organism evidence="3">
    <name type="scientific">Pimpla disparis</name>
    <name type="common">Parasitic wasp</name>
    <name type="synonym">Coccygomimus disparis</name>
    <dbReference type="NCBI Taxonomy" id="495387"/>
    <lineage>
        <taxon>Eukaryota</taxon>
        <taxon>Metazoa</taxon>
        <taxon>Ecdysozoa</taxon>
        <taxon>Arthropoda</taxon>
        <taxon>Hexapoda</taxon>
        <taxon>Insecta</taxon>
        <taxon>Pterygota</taxon>
        <taxon>Neoptera</taxon>
        <taxon>Endopterygota</taxon>
        <taxon>Hymenoptera</taxon>
        <taxon>Apocrita</taxon>
        <taxon>Ichneumonoidea</taxon>
        <taxon>Ichneumonidae</taxon>
        <taxon>Pimplinae</taxon>
        <taxon>Pimplini</taxon>
        <taxon>Pimpla</taxon>
    </lineage>
</organism>
<reference evidence="4" key="1">
    <citation type="journal article" date="1994" name="J. Biol. Chem.">
        <title>Biodiversity of apidaecin-type peptide antibiotics. Prospects of manipulating the antibacterial spectrum and combating acquired resistance.</title>
        <authorList>
            <person name="Casteels P."/>
            <person name="Romagnolo J."/>
            <person name="Castle M."/>
            <person name="Casteels-Josson K."/>
            <person name="Erdjument-Bromage H."/>
            <person name="Tempst P."/>
        </authorList>
    </citation>
    <scope>PROTEIN SEQUENCE</scope>
    <scope>FUNCTION</scope>
    <scope>SUBCELLULAR LOCATION</scope>
    <scope>INDUCTION</scope>
    <scope>MASS SPECTROMETRY</scope>
    <source>
        <tissue evidence="3">Hemolymph</tissue>
    </source>
</reference>
<keyword id="KW-0044">Antibiotic</keyword>
<keyword id="KW-0929">Antimicrobial</keyword>
<keyword id="KW-0903">Direct protein sequencing</keyword>
<keyword id="KW-0391">Immunity</keyword>
<keyword id="KW-0399">Innate immunity</keyword>
<keyword id="KW-0964">Secreted</keyword>
<feature type="peptide" id="PRO_0000441348" description="Apidaecin 1+" evidence="2">
    <location>
        <begin position="1"/>
        <end position="20"/>
    </location>
</feature>
<feature type="peptide" id="PRO_0000441349" description="Apidaecin 1-" evidence="2">
    <location>
        <begin position="4"/>
        <end position="20"/>
    </location>
</feature>
<feature type="region of interest" description="Disordered" evidence="1">
    <location>
        <begin position="1"/>
        <end position="20"/>
    </location>
</feature>
<name>APD1_PIMDI</name>
<protein>
    <recommendedName>
        <fullName evidence="3">Apidaecin 1+</fullName>
    </recommendedName>
    <component>
        <recommendedName>
            <fullName evidence="3">Apidaecin 1-</fullName>
        </recommendedName>
    </component>
</protein>
<evidence type="ECO:0000256" key="1">
    <source>
        <dbReference type="SAM" id="MobiDB-lite"/>
    </source>
</evidence>
<evidence type="ECO:0000269" key="2">
    <source>
    </source>
</evidence>
<evidence type="ECO:0000303" key="3">
    <source>
    </source>
</evidence>
<evidence type="ECO:0000305" key="4"/>
<comment type="function">
    <text evidence="2">Antimicrobial peptide active against many Gram-negative enterobacterial and plant-associated bacterial species. Not active against other bacterial species like H.pylori, P.mirabilis, B.pertussis or N.gonorrhoeae.</text>
</comment>
<comment type="function">
    <molecule>Apidaecin 1+</molecule>
    <text evidence="2">Among others, also active against C.jejuni and L.pneumophila but not against Y.enterocolitica.</text>
</comment>
<comment type="function">
    <molecule>Apidaecin 1-</molecule>
    <text evidence="2">Among others, also active against Y.enterocolitica butnot against L.pneumophila and C.jejuni.</text>
</comment>
<comment type="subcellular location">
    <subcellularLocation>
        <location evidence="2">Secreted</location>
    </subcellularLocation>
</comment>
<comment type="induction">
    <text evidence="2">By bacterial infection.</text>
</comment>
<comment type="mass spectrometry">
    <molecule>Apidaecin 1+</molecule>
    <text>Apidaecin Cd 1+.</text>
</comment>
<comment type="mass spectrometry">
    <molecule>Apidaecin 1-</molecule>
    <text>Apidaecin Cd 1-.</text>
</comment>
<comment type="similarity">
    <text evidence="4">Belongs to the apidaecin family.</text>
</comment>